<gene>
    <name type="primary">OR8B12</name>
</gene>
<sequence length="310" mass="34372">MAAKNSSVTEFILEGLTHQPGLRIPLFFLFLGFYTVTVVGNLGLITLIGLNSHLHTPMYFFLFNLSLIDFCFSTTITPKMLMSFVSRKNIISFTGCMTQLFFFCFFVVSESFILSAMAYDRYVAICNPLLYTVTMSCQVCLLLLLGAYGMGFAGAMAHTGSIMNLTFCADNLVNHFMCDILPLLELSCNSSYMNELVVFIVVAVDVGMPIVTVFISYALILSSILHNSSTEGRSKAFSTCSSHIIVVSLFFGSGAFMYLKPLSILPLEQGKVSSLFYTIIVPVLNPLIYSLRNKDVKVALRRTLGRKIFS</sequence>
<feature type="chain" id="PRO_0000150658" description="Olfactory receptor 8B12">
    <location>
        <begin position="1"/>
        <end position="310"/>
    </location>
</feature>
<feature type="topological domain" description="Extracellular" evidence="1">
    <location>
        <begin position="1"/>
        <end position="24"/>
    </location>
</feature>
<feature type="transmembrane region" description="Helical; Name=1" evidence="1">
    <location>
        <begin position="25"/>
        <end position="45"/>
    </location>
</feature>
<feature type="topological domain" description="Cytoplasmic" evidence="1">
    <location>
        <begin position="46"/>
        <end position="53"/>
    </location>
</feature>
<feature type="transmembrane region" description="Helical; Name=2" evidence="1">
    <location>
        <begin position="54"/>
        <end position="74"/>
    </location>
</feature>
<feature type="topological domain" description="Extracellular" evidence="1">
    <location>
        <begin position="75"/>
        <end position="98"/>
    </location>
</feature>
<feature type="transmembrane region" description="Helical; Name=3" evidence="1">
    <location>
        <begin position="99"/>
        <end position="119"/>
    </location>
</feature>
<feature type="topological domain" description="Cytoplasmic" evidence="1">
    <location>
        <begin position="120"/>
        <end position="138"/>
    </location>
</feature>
<feature type="transmembrane region" description="Helical; Name=4" evidence="1">
    <location>
        <begin position="139"/>
        <end position="159"/>
    </location>
</feature>
<feature type="topological domain" description="Extracellular" evidence="1">
    <location>
        <begin position="160"/>
        <end position="196"/>
    </location>
</feature>
<feature type="transmembrane region" description="Helical; Name=5" evidence="1">
    <location>
        <begin position="197"/>
        <end position="216"/>
    </location>
</feature>
<feature type="topological domain" description="Cytoplasmic" evidence="1">
    <location>
        <begin position="217"/>
        <end position="236"/>
    </location>
</feature>
<feature type="transmembrane region" description="Helical; Name=6" evidence="1">
    <location>
        <begin position="237"/>
        <end position="257"/>
    </location>
</feature>
<feature type="topological domain" description="Extracellular" evidence="1">
    <location>
        <begin position="258"/>
        <end position="270"/>
    </location>
</feature>
<feature type="transmembrane region" description="Helical; Name=7" evidence="1">
    <location>
        <begin position="271"/>
        <end position="291"/>
    </location>
</feature>
<feature type="topological domain" description="Cytoplasmic" evidence="1">
    <location>
        <begin position="292"/>
        <end position="310"/>
    </location>
</feature>
<feature type="glycosylation site" description="N-linked (GlcNAc...) asparagine" evidence="1">
    <location>
        <position position="5"/>
    </location>
</feature>
<feature type="glycosylation site" description="N-linked (GlcNAc...) asparagine" evidence="1">
    <location>
        <position position="164"/>
    </location>
</feature>
<feature type="glycosylation site" description="N-linked (GlcNAc...) asparagine" evidence="1">
    <location>
        <position position="189"/>
    </location>
</feature>
<feature type="disulfide bond" evidence="2">
    <location>
        <begin position="96"/>
        <end position="188"/>
    </location>
</feature>
<reference key="1">
    <citation type="submission" date="2001-07" db="EMBL/GenBank/DDBJ databases">
        <title>Genome-wide discovery and analysis of human seven transmembrane helix receptor genes.</title>
        <authorList>
            <person name="Suwa M."/>
            <person name="Sato T."/>
            <person name="Okouchi I."/>
            <person name="Arita M."/>
            <person name="Futami K."/>
            <person name="Matsumoto S."/>
            <person name="Tsutsumi S."/>
            <person name="Aburatani H."/>
            <person name="Asai K."/>
            <person name="Akiyama Y."/>
        </authorList>
    </citation>
    <scope>NUCLEOTIDE SEQUENCE [GENOMIC DNA]</scope>
</reference>
<reference key="2">
    <citation type="submission" date="2005-07" db="EMBL/GenBank/DDBJ databases">
        <authorList>
            <person name="Mural R.J."/>
            <person name="Istrail S."/>
            <person name="Sutton G.G."/>
            <person name="Florea L."/>
            <person name="Halpern A.L."/>
            <person name="Mobarry C.M."/>
            <person name="Lippert R."/>
            <person name="Walenz B."/>
            <person name="Shatkay H."/>
            <person name="Dew I."/>
            <person name="Miller J.R."/>
            <person name="Flanigan M.J."/>
            <person name="Edwards N.J."/>
            <person name="Bolanos R."/>
            <person name="Fasulo D."/>
            <person name="Halldorsson B.V."/>
            <person name="Hannenhalli S."/>
            <person name="Turner R."/>
            <person name="Yooseph S."/>
            <person name="Lu F."/>
            <person name="Nusskern D.R."/>
            <person name="Shue B.C."/>
            <person name="Zheng X.H."/>
            <person name="Zhong F."/>
            <person name="Delcher A.L."/>
            <person name="Huson D.H."/>
            <person name="Kravitz S.A."/>
            <person name="Mouchard L."/>
            <person name="Reinert K."/>
            <person name="Remington K.A."/>
            <person name="Clark A.G."/>
            <person name="Waterman M.S."/>
            <person name="Eichler E.E."/>
            <person name="Adams M.D."/>
            <person name="Hunkapiller M.W."/>
            <person name="Myers E.W."/>
            <person name="Venter J.C."/>
        </authorList>
    </citation>
    <scope>NUCLEOTIDE SEQUENCE [LARGE SCALE GENOMIC DNA]</scope>
</reference>
<reference key="3">
    <citation type="journal article" date="2004" name="Genome Res.">
        <title>The status, quality, and expansion of the NIH full-length cDNA project: the Mammalian Gene Collection (MGC).</title>
        <authorList>
            <consortium name="The MGC Project Team"/>
        </authorList>
    </citation>
    <scope>NUCLEOTIDE SEQUENCE [LARGE SCALE MRNA]</scope>
</reference>
<reference key="4">
    <citation type="journal article" date="2002" name="Genomics">
        <title>DEFOG: a practical scheme for deciphering families of genes.</title>
        <authorList>
            <person name="Fuchs T."/>
            <person name="Malecova B."/>
            <person name="Linhart C."/>
            <person name="Sharan R."/>
            <person name="Khen M."/>
            <person name="Herwig R."/>
            <person name="Shmulevich D."/>
            <person name="Elkon R."/>
            <person name="Steinfath M."/>
            <person name="O'Brien J.K."/>
            <person name="Radelof U."/>
            <person name="Lehrach H."/>
            <person name="Lancet D."/>
            <person name="Shamir R."/>
        </authorList>
    </citation>
    <scope>NUCLEOTIDE SEQUENCE [GENOMIC DNA] OF 67-283</scope>
</reference>
<reference key="5">
    <citation type="journal article" date="2004" name="Proc. Natl. Acad. Sci. U.S.A.">
        <title>The human olfactory receptor gene family.</title>
        <authorList>
            <person name="Malnic B."/>
            <person name="Godfrey P.A."/>
            <person name="Buck L.B."/>
        </authorList>
    </citation>
    <scope>IDENTIFICATION</scope>
</reference>
<reference key="6">
    <citation type="journal article" date="2004" name="Proc. Natl. Acad. Sci. U.S.A.">
        <authorList>
            <person name="Malnic B."/>
            <person name="Godfrey P.A."/>
            <person name="Buck L.B."/>
        </authorList>
    </citation>
    <scope>ERRATUM OF PUBMED:14983052</scope>
</reference>
<comment type="function">
    <text evidence="3">Odorant receptor.</text>
</comment>
<comment type="subcellular location">
    <subcellularLocation>
        <location>Cell membrane</location>
        <topology>Multi-pass membrane protein</topology>
    </subcellularLocation>
</comment>
<comment type="similarity">
    <text evidence="2">Belongs to the G-protein coupled receptor 1 family.</text>
</comment>
<comment type="online information" name="Human Olfactory Receptor Data Exploratorium (HORDE)">
    <link uri="http://genome.weizmann.ac.il/horde/card/index/symbol:OR8B12"/>
</comment>
<dbReference type="EMBL" id="AB065834">
    <property type="protein sequence ID" value="BAC06053.1"/>
    <property type="molecule type" value="Genomic_DNA"/>
</dbReference>
<dbReference type="EMBL" id="CH471065">
    <property type="protein sequence ID" value="EAW67585.1"/>
    <property type="molecule type" value="Genomic_DNA"/>
</dbReference>
<dbReference type="EMBL" id="BC136863">
    <property type="protein sequence ID" value="AAI36864.1"/>
    <property type="molecule type" value="mRNA"/>
</dbReference>
<dbReference type="EMBL" id="BC136864">
    <property type="protein sequence ID" value="AAI36865.1"/>
    <property type="molecule type" value="mRNA"/>
</dbReference>
<dbReference type="EMBL" id="AF399511">
    <property type="protein sequence ID" value="AAK94996.1"/>
    <property type="molecule type" value="Genomic_DNA"/>
</dbReference>
<dbReference type="EMBL" id="BK004494">
    <property type="protein sequence ID" value="DAA04892.1"/>
    <property type="molecule type" value="Genomic_DNA"/>
</dbReference>
<dbReference type="CCDS" id="CCDS31711.1"/>
<dbReference type="RefSeq" id="NP_001005195.1">
    <property type="nucleotide sequence ID" value="NM_001005195.1"/>
</dbReference>
<dbReference type="SMR" id="Q8NGG6"/>
<dbReference type="FunCoup" id="Q8NGG6">
    <property type="interactions" value="416"/>
</dbReference>
<dbReference type="STRING" id="9606.ENSP00000307159"/>
<dbReference type="GlyCosmos" id="Q8NGG6">
    <property type="glycosylation" value="3 sites, No reported glycans"/>
</dbReference>
<dbReference type="GlyGen" id="Q8NGG6">
    <property type="glycosylation" value="3 sites"/>
</dbReference>
<dbReference type="iPTMnet" id="Q8NGG6"/>
<dbReference type="PhosphoSitePlus" id="Q8NGG6"/>
<dbReference type="BioMuta" id="OR8B12"/>
<dbReference type="DMDM" id="38372689"/>
<dbReference type="MassIVE" id="Q8NGG6"/>
<dbReference type="PaxDb" id="9606-ENSP00000307159"/>
<dbReference type="Antibodypedia" id="64024">
    <property type="antibodies" value="58 antibodies from 16 providers"/>
</dbReference>
<dbReference type="DNASU" id="219858"/>
<dbReference type="Ensembl" id="ENST00000306842.3">
    <property type="protein sequence ID" value="ENSP00000307159.2"/>
    <property type="gene ID" value="ENSG00000170953.4"/>
</dbReference>
<dbReference type="GeneID" id="219858"/>
<dbReference type="KEGG" id="hsa:219858"/>
<dbReference type="MANE-Select" id="ENST00000306842.3">
    <property type="protein sequence ID" value="ENSP00000307159.2"/>
    <property type="RefSeq nucleotide sequence ID" value="NM_001005195.1"/>
    <property type="RefSeq protein sequence ID" value="NP_001005195.1"/>
</dbReference>
<dbReference type="UCSC" id="uc010sam.3">
    <property type="organism name" value="human"/>
</dbReference>
<dbReference type="AGR" id="HGNC:15307"/>
<dbReference type="CTD" id="219858"/>
<dbReference type="GeneCards" id="OR8B12"/>
<dbReference type="HGNC" id="HGNC:15307">
    <property type="gene designation" value="OR8B12"/>
</dbReference>
<dbReference type="HPA" id="ENSG00000170953">
    <property type="expression patterns" value="Not detected"/>
</dbReference>
<dbReference type="neXtProt" id="NX_Q8NGG6"/>
<dbReference type="PharmGKB" id="PA32748"/>
<dbReference type="VEuPathDB" id="HostDB:ENSG00000170953"/>
<dbReference type="eggNOG" id="ENOG502TAH8">
    <property type="taxonomic scope" value="Eukaryota"/>
</dbReference>
<dbReference type="GeneTree" id="ENSGT01010000222320"/>
<dbReference type="HOGENOM" id="CLU_012526_1_0_1"/>
<dbReference type="InParanoid" id="Q8NGG6"/>
<dbReference type="OMA" id="HTGSIMN"/>
<dbReference type="OrthoDB" id="9829870at2759"/>
<dbReference type="PAN-GO" id="Q8NGG6">
    <property type="GO annotations" value="4 GO annotations based on evolutionary models"/>
</dbReference>
<dbReference type="PhylomeDB" id="Q8NGG6"/>
<dbReference type="TreeFam" id="TF352753"/>
<dbReference type="PathwayCommons" id="Q8NGG6"/>
<dbReference type="Reactome" id="R-HSA-9752946">
    <property type="pathway name" value="Expression and translocation of olfactory receptors"/>
</dbReference>
<dbReference type="BioGRID-ORCS" id="219858">
    <property type="hits" value="12 hits in 736 CRISPR screens"/>
</dbReference>
<dbReference type="GeneWiki" id="OR8B12"/>
<dbReference type="GenomeRNAi" id="219858"/>
<dbReference type="Pharos" id="Q8NGG6">
    <property type="development level" value="Tdark"/>
</dbReference>
<dbReference type="PRO" id="PR:Q8NGG6"/>
<dbReference type="Proteomes" id="UP000005640">
    <property type="component" value="Chromosome 11"/>
</dbReference>
<dbReference type="RNAct" id="Q8NGG6">
    <property type="molecule type" value="protein"/>
</dbReference>
<dbReference type="Bgee" id="ENSG00000170953">
    <property type="expression patterns" value="Expressed in male germ line stem cell (sensu Vertebrata) in testis and 2 other cell types or tissues"/>
</dbReference>
<dbReference type="ExpressionAtlas" id="Q8NGG6">
    <property type="expression patterns" value="baseline and differential"/>
</dbReference>
<dbReference type="GO" id="GO:0005886">
    <property type="term" value="C:plasma membrane"/>
    <property type="evidence" value="ECO:0007669"/>
    <property type="project" value="UniProtKB-SubCell"/>
</dbReference>
<dbReference type="GO" id="GO:0004930">
    <property type="term" value="F:G protein-coupled receptor activity"/>
    <property type="evidence" value="ECO:0007669"/>
    <property type="project" value="UniProtKB-KW"/>
</dbReference>
<dbReference type="GO" id="GO:0005549">
    <property type="term" value="F:odorant binding"/>
    <property type="evidence" value="ECO:0000318"/>
    <property type="project" value="GO_Central"/>
</dbReference>
<dbReference type="GO" id="GO:0004984">
    <property type="term" value="F:olfactory receptor activity"/>
    <property type="evidence" value="ECO:0000318"/>
    <property type="project" value="GO_Central"/>
</dbReference>
<dbReference type="GO" id="GO:0007186">
    <property type="term" value="P:G protein-coupled receptor signaling pathway"/>
    <property type="evidence" value="ECO:0000318"/>
    <property type="project" value="GO_Central"/>
</dbReference>
<dbReference type="GO" id="GO:0007608">
    <property type="term" value="P:sensory perception of smell"/>
    <property type="evidence" value="ECO:0000318"/>
    <property type="project" value="GO_Central"/>
</dbReference>
<dbReference type="CDD" id="cd15405">
    <property type="entry name" value="7tmA_OR8B-like"/>
    <property type="match status" value="1"/>
</dbReference>
<dbReference type="FunFam" id="1.10.1220.70:FF:000001">
    <property type="entry name" value="Olfactory receptor"/>
    <property type="match status" value="1"/>
</dbReference>
<dbReference type="FunFam" id="1.20.1070.10:FF:000004">
    <property type="entry name" value="Olfactory receptor"/>
    <property type="match status" value="1"/>
</dbReference>
<dbReference type="Gene3D" id="1.20.1070.10">
    <property type="entry name" value="Rhodopsin 7-helix transmembrane proteins"/>
    <property type="match status" value="1"/>
</dbReference>
<dbReference type="InterPro" id="IPR000276">
    <property type="entry name" value="GPCR_Rhodpsn"/>
</dbReference>
<dbReference type="InterPro" id="IPR017452">
    <property type="entry name" value="GPCR_Rhodpsn_7TM"/>
</dbReference>
<dbReference type="InterPro" id="IPR000725">
    <property type="entry name" value="Olfact_rcpt"/>
</dbReference>
<dbReference type="PANTHER" id="PTHR48018">
    <property type="entry name" value="OLFACTORY RECEPTOR"/>
    <property type="match status" value="1"/>
</dbReference>
<dbReference type="Pfam" id="PF13853">
    <property type="entry name" value="7tm_4"/>
    <property type="match status" value="1"/>
</dbReference>
<dbReference type="PRINTS" id="PR00237">
    <property type="entry name" value="GPCRRHODOPSN"/>
</dbReference>
<dbReference type="PRINTS" id="PR00245">
    <property type="entry name" value="OLFACTORYR"/>
</dbReference>
<dbReference type="SUPFAM" id="SSF81321">
    <property type="entry name" value="Family A G protein-coupled receptor-like"/>
    <property type="match status" value="1"/>
</dbReference>
<dbReference type="PROSITE" id="PS00237">
    <property type="entry name" value="G_PROTEIN_RECEP_F1_1"/>
    <property type="match status" value="1"/>
</dbReference>
<dbReference type="PROSITE" id="PS50262">
    <property type="entry name" value="G_PROTEIN_RECEP_F1_2"/>
    <property type="match status" value="1"/>
</dbReference>
<evidence type="ECO:0000255" key="1"/>
<evidence type="ECO:0000255" key="2">
    <source>
        <dbReference type="PROSITE-ProRule" id="PRU00521"/>
    </source>
</evidence>
<evidence type="ECO:0000305" key="3"/>
<proteinExistence type="evidence at transcript level"/>
<accession>Q8NGG6</accession>
<accession>B2RNF6</accession>
<accession>Q6IEW8</accession>
<accession>Q96RC7</accession>
<organism>
    <name type="scientific">Homo sapiens</name>
    <name type="common">Human</name>
    <dbReference type="NCBI Taxonomy" id="9606"/>
    <lineage>
        <taxon>Eukaryota</taxon>
        <taxon>Metazoa</taxon>
        <taxon>Chordata</taxon>
        <taxon>Craniata</taxon>
        <taxon>Vertebrata</taxon>
        <taxon>Euteleostomi</taxon>
        <taxon>Mammalia</taxon>
        <taxon>Eutheria</taxon>
        <taxon>Euarchontoglires</taxon>
        <taxon>Primates</taxon>
        <taxon>Haplorrhini</taxon>
        <taxon>Catarrhini</taxon>
        <taxon>Hominidae</taxon>
        <taxon>Homo</taxon>
    </lineage>
</organism>
<keyword id="KW-1003">Cell membrane</keyword>
<keyword id="KW-1015">Disulfide bond</keyword>
<keyword id="KW-0297">G-protein coupled receptor</keyword>
<keyword id="KW-0325">Glycoprotein</keyword>
<keyword id="KW-0472">Membrane</keyword>
<keyword id="KW-0552">Olfaction</keyword>
<keyword id="KW-0675">Receptor</keyword>
<keyword id="KW-1185">Reference proteome</keyword>
<keyword id="KW-0716">Sensory transduction</keyword>
<keyword id="KW-0807">Transducer</keyword>
<keyword id="KW-0812">Transmembrane</keyword>
<keyword id="KW-1133">Transmembrane helix</keyword>
<name>OR8BC_HUMAN</name>
<protein>
    <recommendedName>
        <fullName>Olfactory receptor 8B12</fullName>
    </recommendedName>
    <alternativeName>
        <fullName>Olfactory receptor OR11-317</fullName>
    </alternativeName>
</protein>